<protein>
    <recommendedName>
        <fullName>Autophagy-related protein 22</fullName>
    </recommendedName>
</protein>
<dbReference type="EMBL" id="CR382129">
    <property type="protein sequence ID" value="CAG81705.1"/>
    <property type="molecule type" value="Genomic_DNA"/>
</dbReference>
<dbReference type="RefSeq" id="XP_501406.1">
    <property type="nucleotide sequence ID" value="XM_501406.1"/>
</dbReference>
<dbReference type="FunCoup" id="Q6CD56">
    <property type="interactions" value="27"/>
</dbReference>
<dbReference type="STRING" id="284591.Q6CD56"/>
<dbReference type="GlyCosmos" id="Q6CD56">
    <property type="glycosylation" value="2 sites, No reported glycans"/>
</dbReference>
<dbReference type="EnsemblFungi" id="CAG81705">
    <property type="protein sequence ID" value="CAG81705"/>
    <property type="gene ID" value="YALI0_C03608g"/>
</dbReference>
<dbReference type="KEGG" id="yli:2909909"/>
<dbReference type="VEuPathDB" id="FungiDB:YALI0_C03608g"/>
<dbReference type="HOGENOM" id="CLU_017518_1_0_1"/>
<dbReference type="InParanoid" id="Q6CD56"/>
<dbReference type="OMA" id="QQQWEMY"/>
<dbReference type="OrthoDB" id="123684at4891"/>
<dbReference type="Proteomes" id="UP000001300">
    <property type="component" value="Chromosome C"/>
</dbReference>
<dbReference type="GO" id="GO:0000329">
    <property type="term" value="C:fungal-type vacuole membrane"/>
    <property type="evidence" value="ECO:0007669"/>
    <property type="project" value="EnsemblFungi"/>
</dbReference>
<dbReference type="GO" id="GO:0032974">
    <property type="term" value="P:amino acid transmembrane export from vacuole"/>
    <property type="evidence" value="ECO:0000318"/>
    <property type="project" value="GO_Central"/>
</dbReference>
<dbReference type="GO" id="GO:0006914">
    <property type="term" value="P:autophagy"/>
    <property type="evidence" value="ECO:0007669"/>
    <property type="project" value="UniProtKB-KW"/>
</dbReference>
<dbReference type="CDD" id="cd17483">
    <property type="entry name" value="MFS_Atg22_like"/>
    <property type="match status" value="1"/>
</dbReference>
<dbReference type="Gene3D" id="1.20.1250.20">
    <property type="entry name" value="MFS general substrate transporter like domains"/>
    <property type="match status" value="1"/>
</dbReference>
<dbReference type="InterPro" id="IPR044738">
    <property type="entry name" value="Atg22"/>
</dbReference>
<dbReference type="InterPro" id="IPR024671">
    <property type="entry name" value="Atg22-like"/>
</dbReference>
<dbReference type="InterPro" id="IPR050495">
    <property type="entry name" value="ATG22/LtaA_families"/>
</dbReference>
<dbReference type="InterPro" id="IPR036259">
    <property type="entry name" value="MFS_trans_sf"/>
</dbReference>
<dbReference type="PANTHER" id="PTHR23519">
    <property type="entry name" value="AUTOPHAGY-RELATED PROTEIN 22"/>
    <property type="match status" value="1"/>
</dbReference>
<dbReference type="PANTHER" id="PTHR23519:SF1">
    <property type="entry name" value="AUTOPHAGY-RELATED PROTEIN 22"/>
    <property type="match status" value="1"/>
</dbReference>
<dbReference type="Pfam" id="PF11700">
    <property type="entry name" value="ATG22"/>
    <property type="match status" value="1"/>
</dbReference>
<dbReference type="SUPFAM" id="SSF103473">
    <property type="entry name" value="MFS general substrate transporter"/>
    <property type="match status" value="1"/>
</dbReference>
<proteinExistence type="inferred from homology"/>
<feature type="chain" id="PRO_0000207628" description="Autophagy-related protein 22">
    <location>
        <begin position="1"/>
        <end position="589"/>
    </location>
</feature>
<feature type="transmembrane region" description="Helical" evidence="2">
    <location>
        <begin position="13"/>
        <end position="33"/>
    </location>
</feature>
<feature type="transmembrane region" description="Helical" evidence="2">
    <location>
        <begin position="128"/>
        <end position="148"/>
    </location>
</feature>
<feature type="transmembrane region" description="Helical" evidence="2">
    <location>
        <begin position="163"/>
        <end position="183"/>
    </location>
</feature>
<feature type="transmembrane region" description="Helical" evidence="2">
    <location>
        <begin position="187"/>
        <end position="207"/>
    </location>
</feature>
<feature type="transmembrane region" description="Helical" evidence="2">
    <location>
        <begin position="284"/>
        <end position="304"/>
    </location>
</feature>
<feature type="transmembrane region" description="Helical" evidence="2">
    <location>
        <begin position="315"/>
        <end position="335"/>
    </location>
</feature>
<feature type="transmembrane region" description="Helical" evidence="2">
    <location>
        <begin position="389"/>
        <end position="409"/>
    </location>
</feature>
<feature type="transmembrane region" description="Helical" evidence="2">
    <location>
        <begin position="426"/>
        <end position="446"/>
    </location>
</feature>
<feature type="transmembrane region" description="Helical" evidence="2">
    <location>
        <begin position="457"/>
        <end position="477"/>
    </location>
</feature>
<feature type="transmembrane region" description="Helical" evidence="2">
    <location>
        <begin position="486"/>
        <end position="506"/>
    </location>
</feature>
<feature type="transmembrane region" description="Helical" evidence="2">
    <location>
        <begin position="525"/>
        <end position="545"/>
    </location>
</feature>
<feature type="transmembrane region" description="Helical" evidence="2">
    <location>
        <begin position="554"/>
        <end position="574"/>
    </location>
</feature>
<feature type="region of interest" description="Disordered" evidence="3">
    <location>
        <begin position="48"/>
        <end position="73"/>
    </location>
</feature>
<feature type="region of interest" description="Disordered" evidence="3">
    <location>
        <begin position="221"/>
        <end position="257"/>
    </location>
</feature>
<feature type="compositionally biased region" description="Pro residues" evidence="3">
    <location>
        <begin position="56"/>
        <end position="66"/>
    </location>
</feature>
<feature type="compositionally biased region" description="Polar residues" evidence="3">
    <location>
        <begin position="235"/>
        <end position="249"/>
    </location>
</feature>
<feature type="glycosylation site" description="N-linked (GlcNAc...) asparagine" evidence="2">
    <location>
        <position position="77"/>
    </location>
</feature>
<feature type="glycosylation site" description="N-linked (GlcNAc...) asparagine" evidence="2">
    <location>
        <position position="275"/>
    </location>
</feature>
<reference key="1">
    <citation type="journal article" date="2004" name="Nature">
        <title>Genome evolution in yeasts.</title>
        <authorList>
            <person name="Dujon B."/>
            <person name="Sherman D."/>
            <person name="Fischer G."/>
            <person name="Durrens P."/>
            <person name="Casaregola S."/>
            <person name="Lafontaine I."/>
            <person name="de Montigny J."/>
            <person name="Marck C."/>
            <person name="Neuveglise C."/>
            <person name="Talla E."/>
            <person name="Goffard N."/>
            <person name="Frangeul L."/>
            <person name="Aigle M."/>
            <person name="Anthouard V."/>
            <person name="Babour A."/>
            <person name="Barbe V."/>
            <person name="Barnay S."/>
            <person name="Blanchin S."/>
            <person name="Beckerich J.-M."/>
            <person name="Beyne E."/>
            <person name="Bleykasten C."/>
            <person name="Boisrame A."/>
            <person name="Boyer J."/>
            <person name="Cattolico L."/>
            <person name="Confanioleri F."/>
            <person name="de Daruvar A."/>
            <person name="Despons L."/>
            <person name="Fabre E."/>
            <person name="Fairhead C."/>
            <person name="Ferry-Dumazet H."/>
            <person name="Groppi A."/>
            <person name="Hantraye F."/>
            <person name="Hennequin C."/>
            <person name="Jauniaux N."/>
            <person name="Joyet P."/>
            <person name="Kachouri R."/>
            <person name="Kerrest A."/>
            <person name="Koszul R."/>
            <person name="Lemaire M."/>
            <person name="Lesur I."/>
            <person name="Ma L."/>
            <person name="Muller H."/>
            <person name="Nicaud J.-M."/>
            <person name="Nikolski M."/>
            <person name="Oztas S."/>
            <person name="Ozier-Kalogeropoulos O."/>
            <person name="Pellenz S."/>
            <person name="Potier S."/>
            <person name="Richard G.-F."/>
            <person name="Straub M.-L."/>
            <person name="Suleau A."/>
            <person name="Swennen D."/>
            <person name="Tekaia F."/>
            <person name="Wesolowski-Louvel M."/>
            <person name="Westhof E."/>
            <person name="Wirth B."/>
            <person name="Zeniou-Meyer M."/>
            <person name="Zivanovic Y."/>
            <person name="Bolotin-Fukuhara M."/>
            <person name="Thierry A."/>
            <person name="Bouchier C."/>
            <person name="Caudron B."/>
            <person name="Scarpelli C."/>
            <person name="Gaillardin C."/>
            <person name="Weissenbach J."/>
            <person name="Wincker P."/>
            <person name="Souciet J.-L."/>
        </authorList>
    </citation>
    <scope>NUCLEOTIDE SEQUENCE [LARGE SCALE GENOMIC DNA]</scope>
    <source>
        <strain>CLIB 122 / E 150</strain>
    </source>
</reference>
<organism>
    <name type="scientific">Yarrowia lipolytica (strain CLIB 122 / E 150)</name>
    <name type="common">Yeast</name>
    <name type="synonym">Candida lipolytica</name>
    <dbReference type="NCBI Taxonomy" id="284591"/>
    <lineage>
        <taxon>Eukaryota</taxon>
        <taxon>Fungi</taxon>
        <taxon>Dikarya</taxon>
        <taxon>Ascomycota</taxon>
        <taxon>Saccharomycotina</taxon>
        <taxon>Dipodascomycetes</taxon>
        <taxon>Dipodascales</taxon>
        <taxon>Dipodascales incertae sedis</taxon>
        <taxon>Yarrowia</taxon>
    </lineage>
</organism>
<name>ATG22_YARLI</name>
<sequence>MDIVATTQKELYGWYAYAWAAEPFMVVAVATYIPQLLQSYARQNAVLADDHSQPCDSPPVPFPGDPGVPTDPGIPPNNSLSSSVPWFLRANEIQLLESPDTVHTMKDHKAKPTQPTCVIKFFGIYIDTASFPLYTFSLSVLLQVVVVISMSGAADRGRFRKQLLLFFGIAGALTTGLFVFITPKRYYLGSFLAIVSNAAFGAATVCGNAYLPVLAAGMKDGTTSEEPSEPSTPSDTSKPASRSENTPLLSASGVDYETGESSNTAEIVKIDHRANVSARISGTGVALGYLAGFIVQIISIYLVITTGSTTWSLRLALLIVGVWWLIFQIPVLMWLKPRPGPPLPIKTDPQNHPWTATLDRVTNGGWSYVTYGWKTLLVTFKEARQMKDVALFLVGWFLVSDGITTINSTAVLFAQGELRMSPANLAVMGMLVVISGISGAKLTPLIGGTRASPIKSIVVVVSLAAAVPAYGILGFFFTNIGLKNPWELYVLAVWYGFALGGLNTVCRSTFSMLIPRGKEAVFFSLFSVTDKGSSVLGPLLVGLIVDKTHNLRHAFYLLLVLLITPIGLFLMIDMERGRKEAEYLETVEE</sequence>
<gene>
    <name type="primary">ATG22</name>
    <name type="ordered locus">YALI0C03608g</name>
</gene>
<accession>Q6CD56</accession>
<evidence type="ECO:0000250" key="1"/>
<evidence type="ECO:0000255" key="2"/>
<evidence type="ECO:0000256" key="3">
    <source>
        <dbReference type="SAM" id="MobiDB-lite"/>
    </source>
</evidence>
<evidence type="ECO:0000305" key="4"/>
<keyword id="KW-0029">Amino-acid transport</keyword>
<keyword id="KW-0072">Autophagy</keyword>
<keyword id="KW-0325">Glycoprotein</keyword>
<keyword id="KW-0472">Membrane</keyword>
<keyword id="KW-1185">Reference proteome</keyword>
<keyword id="KW-0812">Transmembrane</keyword>
<keyword id="KW-1133">Transmembrane helix</keyword>
<keyword id="KW-0813">Transport</keyword>
<keyword id="KW-0926">Vacuole</keyword>
<comment type="function">
    <text evidence="1">Vacuolar effluxer which mediate the efflux of amino acids resulting from autophagic degradation. The release of autophagic amino acids allows the maintenance of protein synthesis and viability during nitrogen starvation (By similarity).</text>
</comment>
<comment type="subcellular location">
    <subcellularLocation>
        <location evidence="1">Vacuole membrane</location>
        <topology evidence="1">Multi-pass membrane protein</topology>
    </subcellularLocation>
    <text evidence="1">Vacuole and punctate structures.</text>
</comment>
<comment type="similarity">
    <text evidence="4">Belongs to the ATG22 family.</text>
</comment>